<feature type="chain" id="PRO_0000189720" description="Gamma-glutamyl phosphate reductase">
    <location>
        <begin position="1"/>
        <end position="432"/>
    </location>
</feature>
<evidence type="ECO:0000255" key="1">
    <source>
        <dbReference type="HAMAP-Rule" id="MF_00412"/>
    </source>
</evidence>
<protein>
    <recommendedName>
        <fullName evidence="1">Gamma-glutamyl phosphate reductase</fullName>
        <shortName evidence="1">GPR</shortName>
        <ecNumber evidence="1">1.2.1.41</ecNumber>
    </recommendedName>
    <alternativeName>
        <fullName evidence="1">Glutamate-5-semialdehyde dehydrogenase</fullName>
    </alternativeName>
    <alternativeName>
        <fullName evidence="1">Glutamyl-gamma-semialdehyde dehydrogenase</fullName>
        <shortName evidence="1">GSA dehydrogenase</shortName>
    </alternativeName>
</protein>
<sequence>MTQTDSLPGVQATVQDMGERARRAARVLRSLPTGRKVQALRALAAELRAREAGILAANAQDVQAAEAAGLPAPLVDRLRLSAGALAAIARDVEAVAALPDPVGEQTDEKTLPSGIRVSQRRVPLGVLGVIYESRPNVTVDVAALALMSGNAAILRGGKETVNSNAALEDAIHAALNREGLPADAVQVIRDPDRARMLELLRLDESVDAIIPRGGAGLHRFCVENATVPVIVGGIGVVHIYLDGSFVQTPQDVQIAAALIRNAKTQKPSACNALDTLLIDRAALAALPDVVRPLLESGVEVRADAEAQAALAGAGLNVTSAQLGDYGTEFLALVASLRTVSGLDEALDFIAERGGHTDVILTRDPAQAERFVQDVDSAAVMVNVSPRFNDGGQLGLGAEVAISTQKLHARGPMGLRELTTSKWVVRGEGQVRD</sequence>
<gene>
    <name evidence="1" type="primary">proA</name>
    <name type="ordered locus">DR_1826</name>
</gene>
<proteinExistence type="inferred from homology"/>
<accession>Q9RTD9</accession>
<reference key="1">
    <citation type="journal article" date="1999" name="Science">
        <title>Genome sequence of the radioresistant bacterium Deinococcus radiodurans R1.</title>
        <authorList>
            <person name="White O."/>
            <person name="Eisen J.A."/>
            <person name="Heidelberg J.F."/>
            <person name="Hickey E.K."/>
            <person name="Peterson J.D."/>
            <person name="Dodson R.J."/>
            <person name="Haft D.H."/>
            <person name="Gwinn M.L."/>
            <person name="Nelson W.C."/>
            <person name="Richardson D.L."/>
            <person name="Moffat K.S."/>
            <person name="Qin H."/>
            <person name="Jiang L."/>
            <person name="Pamphile W."/>
            <person name="Crosby M."/>
            <person name="Shen M."/>
            <person name="Vamathevan J.J."/>
            <person name="Lam P."/>
            <person name="McDonald L.A."/>
            <person name="Utterback T.R."/>
            <person name="Zalewski C."/>
            <person name="Makarova K.S."/>
            <person name="Aravind L."/>
            <person name="Daly M.J."/>
            <person name="Minton K.W."/>
            <person name="Fleischmann R.D."/>
            <person name="Ketchum K.A."/>
            <person name="Nelson K.E."/>
            <person name="Salzberg S.L."/>
            <person name="Smith H.O."/>
            <person name="Venter J.C."/>
            <person name="Fraser C.M."/>
        </authorList>
    </citation>
    <scope>NUCLEOTIDE SEQUENCE [LARGE SCALE GENOMIC DNA]</scope>
    <source>
        <strain>ATCC 13939 / DSM 20539 / JCM 16871 / CCUG 27074 / LMG 4051 / NBRC 15346 / NCIMB 9279 / VKM B-1422 / R1</strain>
    </source>
</reference>
<keyword id="KW-0028">Amino-acid biosynthesis</keyword>
<keyword id="KW-0963">Cytoplasm</keyword>
<keyword id="KW-0521">NADP</keyword>
<keyword id="KW-0560">Oxidoreductase</keyword>
<keyword id="KW-0641">Proline biosynthesis</keyword>
<keyword id="KW-1185">Reference proteome</keyword>
<name>PROA_DEIRA</name>
<organism>
    <name type="scientific">Deinococcus radiodurans (strain ATCC 13939 / DSM 20539 / JCM 16871 / CCUG 27074 / LMG 4051 / NBRC 15346 / NCIMB 9279 / VKM B-1422 / R1)</name>
    <dbReference type="NCBI Taxonomy" id="243230"/>
    <lineage>
        <taxon>Bacteria</taxon>
        <taxon>Thermotogati</taxon>
        <taxon>Deinococcota</taxon>
        <taxon>Deinococci</taxon>
        <taxon>Deinococcales</taxon>
        <taxon>Deinococcaceae</taxon>
        <taxon>Deinococcus</taxon>
    </lineage>
</organism>
<comment type="function">
    <text evidence="1">Catalyzes the NADPH-dependent reduction of L-glutamate 5-phosphate into L-glutamate 5-semialdehyde and phosphate. The product spontaneously undergoes cyclization to form 1-pyrroline-5-carboxylate.</text>
</comment>
<comment type="catalytic activity">
    <reaction evidence="1">
        <text>L-glutamate 5-semialdehyde + phosphate + NADP(+) = L-glutamyl 5-phosphate + NADPH + H(+)</text>
        <dbReference type="Rhea" id="RHEA:19541"/>
        <dbReference type="ChEBI" id="CHEBI:15378"/>
        <dbReference type="ChEBI" id="CHEBI:43474"/>
        <dbReference type="ChEBI" id="CHEBI:57783"/>
        <dbReference type="ChEBI" id="CHEBI:58066"/>
        <dbReference type="ChEBI" id="CHEBI:58274"/>
        <dbReference type="ChEBI" id="CHEBI:58349"/>
        <dbReference type="EC" id="1.2.1.41"/>
    </reaction>
</comment>
<comment type="pathway">
    <text evidence="1">Amino-acid biosynthesis; L-proline biosynthesis; L-glutamate 5-semialdehyde from L-glutamate: step 2/2.</text>
</comment>
<comment type="subcellular location">
    <subcellularLocation>
        <location evidence="1">Cytoplasm</location>
    </subcellularLocation>
</comment>
<comment type="similarity">
    <text evidence="1">Belongs to the gamma-glutamyl phosphate reductase family.</text>
</comment>
<dbReference type="EC" id="1.2.1.41" evidence="1"/>
<dbReference type="EMBL" id="AE000513">
    <property type="protein sequence ID" value="AAF11380.1"/>
    <property type="molecule type" value="Genomic_DNA"/>
</dbReference>
<dbReference type="PIR" id="D75348">
    <property type="entry name" value="D75348"/>
</dbReference>
<dbReference type="RefSeq" id="NP_295549.1">
    <property type="nucleotide sequence ID" value="NC_001263.1"/>
</dbReference>
<dbReference type="RefSeq" id="WP_010888461.1">
    <property type="nucleotide sequence ID" value="NC_001263.1"/>
</dbReference>
<dbReference type="SMR" id="Q9RTD9"/>
<dbReference type="FunCoup" id="Q9RTD9">
    <property type="interactions" value="356"/>
</dbReference>
<dbReference type="STRING" id="243230.DR_1826"/>
<dbReference type="PaxDb" id="243230-DR_1826"/>
<dbReference type="EnsemblBacteria" id="AAF11380">
    <property type="protein sequence ID" value="AAF11380"/>
    <property type="gene ID" value="DR_1826"/>
</dbReference>
<dbReference type="GeneID" id="69518067"/>
<dbReference type="KEGG" id="dra:DR_1826"/>
<dbReference type="PATRIC" id="fig|243230.17.peg.2038"/>
<dbReference type="eggNOG" id="COG0014">
    <property type="taxonomic scope" value="Bacteria"/>
</dbReference>
<dbReference type="HOGENOM" id="CLU_030231_0_0_0"/>
<dbReference type="InParanoid" id="Q9RTD9"/>
<dbReference type="OrthoDB" id="9809970at2"/>
<dbReference type="UniPathway" id="UPA00098">
    <property type="reaction ID" value="UER00360"/>
</dbReference>
<dbReference type="Proteomes" id="UP000002524">
    <property type="component" value="Chromosome 1"/>
</dbReference>
<dbReference type="GO" id="GO:0005737">
    <property type="term" value="C:cytoplasm"/>
    <property type="evidence" value="ECO:0007669"/>
    <property type="project" value="UniProtKB-SubCell"/>
</dbReference>
<dbReference type="GO" id="GO:0004350">
    <property type="term" value="F:glutamate-5-semialdehyde dehydrogenase activity"/>
    <property type="evidence" value="ECO:0000318"/>
    <property type="project" value="GO_Central"/>
</dbReference>
<dbReference type="GO" id="GO:0050661">
    <property type="term" value="F:NADP binding"/>
    <property type="evidence" value="ECO:0007669"/>
    <property type="project" value="InterPro"/>
</dbReference>
<dbReference type="GO" id="GO:0055129">
    <property type="term" value="P:L-proline biosynthetic process"/>
    <property type="evidence" value="ECO:0007669"/>
    <property type="project" value="UniProtKB-UniRule"/>
</dbReference>
<dbReference type="CDD" id="cd07079">
    <property type="entry name" value="ALDH_F18-19_ProA-GPR"/>
    <property type="match status" value="1"/>
</dbReference>
<dbReference type="Gene3D" id="3.40.605.10">
    <property type="entry name" value="Aldehyde Dehydrogenase, Chain A, domain 1"/>
    <property type="match status" value="1"/>
</dbReference>
<dbReference type="Gene3D" id="3.40.309.10">
    <property type="entry name" value="Aldehyde Dehydrogenase, Chain A, domain 2"/>
    <property type="match status" value="1"/>
</dbReference>
<dbReference type="HAMAP" id="MF_00412">
    <property type="entry name" value="ProA"/>
    <property type="match status" value="1"/>
</dbReference>
<dbReference type="InterPro" id="IPR016161">
    <property type="entry name" value="Ald_DH/histidinol_DH"/>
</dbReference>
<dbReference type="InterPro" id="IPR016163">
    <property type="entry name" value="Ald_DH_C"/>
</dbReference>
<dbReference type="InterPro" id="IPR016162">
    <property type="entry name" value="Ald_DH_N"/>
</dbReference>
<dbReference type="InterPro" id="IPR015590">
    <property type="entry name" value="Aldehyde_DH_dom"/>
</dbReference>
<dbReference type="InterPro" id="IPR020593">
    <property type="entry name" value="G-glutamylP_reductase_CS"/>
</dbReference>
<dbReference type="InterPro" id="IPR012134">
    <property type="entry name" value="Glu-5-SA_DH"/>
</dbReference>
<dbReference type="InterPro" id="IPR000965">
    <property type="entry name" value="GPR_dom"/>
</dbReference>
<dbReference type="NCBIfam" id="NF001221">
    <property type="entry name" value="PRK00197.1"/>
    <property type="match status" value="1"/>
</dbReference>
<dbReference type="NCBIfam" id="TIGR00407">
    <property type="entry name" value="proA"/>
    <property type="match status" value="1"/>
</dbReference>
<dbReference type="PANTHER" id="PTHR11063:SF8">
    <property type="entry name" value="DELTA-1-PYRROLINE-5-CARBOXYLATE SYNTHASE"/>
    <property type="match status" value="1"/>
</dbReference>
<dbReference type="PANTHER" id="PTHR11063">
    <property type="entry name" value="GLUTAMATE SEMIALDEHYDE DEHYDROGENASE"/>
    <property type="match status" value="1"/>
</dbReference>
<dbReference type="Pfam" id="PF00171">
    <property type="entry name" value="Aldedh"/>
    <property type="match status" value="1"/>
</dbReference>
<dbReference type="PIRSF" id="PIRSF000151">
    <property type="entry name" value="GPR"/>
    <property type="match status" value="1"/>
</dbReference>
<dbReference type="SUPFAM" id="SSF53720">
    <property type="entry name" value="ALDH-like"/>
    <property type="match status" value="1"/>
</dbReference>
<dbReference type="PROSITE" id="PS01223">
    <property type="entry name" value="PROA"/>
    <property type="match status" value="1"/>
</dbReference>